<comment type="function">
    <text evidence="1">This is one of the proteins that bind and probably mediate the attachment of the 5S RNA into the large ribosomal subunit, where it forms part of the central protuberance. In the 70S ribosome it contacts protein S13 of the 30S subunit (bridge B1b), connecting the 2 subunits; this bridge is implicated in subunit movement. Contacts the P site tRNA; the 5S rRNA and some of its associated proteins might help stabilize positioning of ribosome-bound tRNAs.</text>
</comment>
<comment type="subunit">
    <text evidence="1">Part of the 50S ribosomal subunit; part of the 5S rRNA/L5/L18/L25 subcomplex. Contacts the 5S rRNA and the P site tRNA. Forms a bridge to the 30S subunit in the 70S ribosome.</text>
</comment>
<comment type="similarity">
    <text evidence="1">Belongs to the universal ribosomal protein uL5 family.</text>
</comment>
<keyword id="KW-0687">Ribonucleoprotein</keyword>
<keyword id="KW-0689">Ribosomal protein</keyword>
<keyword id="KW-0694">RNA-binding</keyword>
<keyword id="KW-0699">rRNA-binding</keyword>
<keyword id="KW-0820">tRNA-binding</keyword>
<organism>
    <name type="scientific">Clostridium botulinum (strain Eklund 17B / Type B)</name>
    <dbReference type="NCBI Taxonomy" id="935198"/>
    <lineage>
        <taxon>Bacteria</taxon>
        <taxon>Bacillati</taxon>
        <taxon>Bacillota</taxon>
        <taxon>Clostridia</taxon>
        <taxon>Eubacteriales</taxon>
        <taxon>Clostridiaceae</taxon>
        <taxon>Clostridium</taxon>
    </lineage>
</organism>
<protein>
    <recommendedName>
        <fullName evidence="1">Large ribosomal subunit protein uL5</fullName>
    </recommendedName>
    <alternativeName>
        <fullName evidence="2">50S ribosomal protein L5</fullName>
    </alternativeName>
</protein>
<sequence length="179" mass="20314">MTRLQEKYSKEVIPAMIEKFGYKNVMEIPKLEKIVINMGVGEAKENQKVLESAVSDLSLIAGQKPILTRAKKSVANFKIRENMALGCKVTLRKAKMYEFADKLMSIALPRVRDFRGVSAKAFDGRGNYSLGIKEQLIFPEIEYDKIDKVRGMDIIFVTTANTDEEARELLRFLGMPFAQ</sequence>
<reference key="1">
    <citation type="submission" date="2008-04" db="EMBL/GenBank/DDBJ databases">
        <title>Complete sequence of Clostridium botulinum strain Eklund.</title>
        <authorList>
            <person name="Brinkac L.M."/>
            <person name="Brown J.L."/>
            <person name="Bruce D."/>
            <person name="Detter C."/>
            <person name="Munk C."/>
            <person name="Smith L.A."/>
            <person name="Smith T.J."/>
            <person name="Sutton G."/>
            <person name="Brettin T.S."/>
        </authorList>
    </citation>
    <scope>NUCLEOTIDE SEQUENCE [LARGE SCALE GENOMIC DNA]</scope>
    <source>
        <strain>Eklund 17B / Type B</strain>
    </source>
</reference>
<name>RL5_CLOBB</name>
<evidence type="ECO:0000255" key="1">
    <source>
        <dbReference type="HAMAP-Rule" id="MF_01333"/>
    </source>
</evidence>
<evidence type="ECO:0000305" key="2"/>
<feature type="chain" id="PRO_1000142376" description="Large ribosomal subunit protein uL5">
    <location>
        <begin position="1"/>
        <end position="179"/>
    </location>
</feature>
<gene>
    <name evidence="1" type="primary">rplE</name>
    <name type="ordered locus">CLL_A0250</name>
</gene>
<accession>B2TII7</accession>
<dbReference type="EMBL" id="CP001056">
    <property type="protein sequence ID" value="ACD24577.1"/>
    <property type="molecule type" value="Genomic_DNA"/>
</dbReference>
<dbReference type="SMR" id="B2TII7"/>
<dbReference type="KEGG" id="cbk:CLL_A0250"/>
<dbReference type="PATRIC" id="fig|935198.13.peg.225"/>
<dbReference type="HOGENOM" id="CLU_061015_2_1_9"/>
<dbReference type="Proteomes" id="UP000001195">
    <property type="component" value="Chromosome"/>
</dbReference>
<dbReference type="GO" id="GO:1990904">
    <property type="term" value="C:ribonucleoprotein complex"/>
    <property type="evidence" value="ECO:0007669"/>
    <property type="project" value="UniProtKB-KW"/>
</dbReference>
<dbReference type="GO" id="GO:0005840">
    <property type="term" value="C:ribosome"/>
    <property type="evidence" value="ECO:0007669"/>
    <property type="project" value="UniProtKB-KW"/>
</dbReference>
<dbReference type="GO" id="GO:0019843">
    <property type="term" value="F:rRNA binding"/>
    <property type="evidence" value="ECO:0007669"/>
    <property type="project" value="UniProtKB-UniRule"/>
</dbReference>
<dbReference type="GO" id="GO:0003735">
    <property type="term" value="F:structural constituent of ribosome"/>
    <property type="evidence" value="ECO:0007669"/>
    <property type="project" value="InterPro"/>
</dbReference>
<dbReference type="GO" id="GO:0000049">
    <property type="term" value="F:tRNA binding"/>
    <property type="evidence" value="ECO:0007669"/>
    <property type="project" value="UniProtKB-UniRule"/>
</dbReference>
<dbReference type="GO" id="GO:0006412">
    <property type="term" value="P:translation"/>
    <property type="evidence" value="ECO:0007669"/>
    <property type="project" value="UniProtKB-UniRule"/>
</dbReference>
<dbReference type="FunFam" id="3.30.1440.10:FF:000001">
    <property type="entry name" value="50S ribosomal protein L5"/>
    <property type="match status" value="1"/>
</dbReference>
<dbReference type="Gene3D" id="3.30.1440.10">
    <property type="match status" value="1"/>
</dbReference>
<dbReference type="HAMAP" id="MF_01333_B">
    <property type="entry name" value="Ribosomal_uL5_B"/>
    <property type="match status" value="1"/>
</dbReference>
<dbReference type="InterPro" id="IPR002132">
    <property type="entry name" value="Ribosomal_uL5"/>
</dbReference>
<dbReference type="InterPro" id="IPR020930">
    <property type="entry name" value="Ribosomal_uL5_bac-type"/>
</dbReference>
<dbReference type="InterPro" id="IPR031309">
    <property type="entry name" value="Ribosomal_uL5_C"/>
</dbReference>
<dbReference type="InterPro" id="IPR020929">
    <property type="entry name" value="Ribosomal_uL5_CS"/>
</dbReference>
<dbReference type="InterPro" id="IPR022803">
    <property type="entry name" value="Ribosomal_uL5_dom_sf"/>
</dbReference>
<dbReference type="InterPro" id="IPR031310">
    <property type="entry name" value="Ribosomal_uL5_N"/>
</dbReference>
<dbReference type="NCBIfam" id="NF000585">
    <property type="entry name" value="PRK00010.1"/>
    <property type="match status" value="1"/>
</dbReference>
<dbReference type="PANTHER" id="PTHR11994">
    <property type="entry name" value="60S RIBOSOMAL PROTEIN L11-RELATED"/>
    <property type="match status" value="1"/>
</dbReference>
<dbReference type="Pfam" id="PF00281">
    <property type="entry name" value="Ribosomal_L5"/>
    <property type="match status" value="1"/>
</dbReference>
<dbReference type="Pfam" id="PF00673">
    <property type="entry name" value="Ribosomal_L5_C"/>
    <property type="match status" value="1"/>
</dbReference>
<dbReference type="PIRSF" id="PIRSF002161">
    <property type="entry name" value="Ribosomal_L5"/>
    <property type="match status" value="1"/>
</dbReference>
<dbReference type="SUPFAM" id="SSF55282">
    <property type="entry name" value="RL5-like"/>
    <property type="match status" value="1"/>
</dbReference>
<dbReference type="PROSITE" id="PS00358">
    <property type="entry name" value="RIBOSOMAL_L5"/>
    <property type="match status" value="1"/>
</dbReference>
<proteinExistence type="inferred from homology"/>